<feature type="chain" id="PRO_0000270390" description="Methionine import ATP-binding protein MetN 2">
    <location>
        <begin position="1"/>
        <end position="341"/>
    </location>
</feature>
<feature type="domain" description="ABC transporter" evidence="1">
    <location>
        <begin position="2"/>
        <end position="241"/>
    </location>
</feature>
<feature type="binding site" evidence="1">
    <location>
        <begin position="38"/>
        <end position="45"/>
    </location>
    <ligand>
        <name>ATP</name>
        <dbReference type="ChEBI" id="CHEBI:30616"/>
    </ligand>
</feature>
<evidence type="ECO:0000255" key="1">
    <source>
        <dbReference type="HAMAP-Rule" id="MF_01719"/>
    </source>
</evidence>
<gene>
    <name evidence="1" type="primary">metN2</name>
    <name type="ordered locus">SACOL0882</name>
</gene>
<proteinExistence type="inferred from homology"/>
<organism>
    <name type="scientific">Staphylococcus aureus (strain COL)</name>
    <dbReference type="NCBI Taxonomy" id="93062"/>
    <lineage>
        <taxon>Bacteria</taxon>
        <taxon>Bacillati</taxon>
        <taxon>Bacillota</taxon>
        <taxon>Bacilli</taxon>
        <taxon>Bacillales</taxon>
        <taxon>Staphylococcaceae</taxon>
        <taxon>Staphylococcus</taxon>
    </lineage>
</organism>
<protein>
    <recommendedName>
        <fullName evidence="1">Methionine import ATP-binding protein MetN 2</fullName>
        <ecNumber evidence="1">7.4.2.11</ecNumber>
    </recommendedName>
</protein>
<keyword id="KW-0029">Amino-acid transport</keyword>
<keyword id="KW-0067">ATP-binding</keyword>
<keyword id="KW-1003">Cell membrane</keyword>
<keyword id="KW-0472">Membrane</keyword>
<keyword id="KW-0547">Nucleotide-binding</keyword>
<keyword id="KW-1278">Translocase</keyword>
<keyword id="KW-0813">Transport</keyword>
<name>METN2_STAAC</name>
<reference key="1">
    <citation type="journal article" date="2005" name="J. Bacteriol.">
        <title>Insights on evolution of virulence and resistance from the complete genome analysis of an early methicillin-resistant Staphylococcus aureus strain and a biofilm-producing methicillin-resistant Staphylococcus epidermidis strain.</title>
        <authorList>
            <person name="Gill S.R."/>
            <person name="Fouts D.E."/>
            <person name="Archer G.L."/>
            <person name="Mongodin E.F."/>
            <person name="DeBoy R.T."/>
            <person name="Ravel J."/>
            <person name="Paulsen I.T."/>
            <person name="Kolonay J.F."/>
            <person name="Brinkac L.M."/>
            <person name="Beanan M.J."/>
            <person name="Dodson R.J."/>
            <person name="Daugherty S.C."/>
            <person name="Madupu R."/>
            <person name="Angiuoli S.V."/>
            <person name="Durkin A.S."/>
            <person name="Haft D.H."/>
            <person name="Vamathevan J.J."/>
            <person name="Khouri H."/>
            <person name="Utterback T.R."/>
            <person name="Lee C."/>
            <person name="Dimitrov G."/>
            <person name="Jiang L."/>
            <person name="Qin H."/>
            <person name="Weidman J."/>
            <person name="Tran K."/>
            <person name="Kang K.H."/>
            <person name="Hance I.R."/>
            <person name="Nelson K.E."/>
            <person name="Fraser C.M."/>
        </authorList>
    </citation>
    <scope>NUCLEOTIDE SEQUENCE [LARGE SCALE GENOMIC DNA]</scope>
    <source>
        <strain>COL</strain>
    </source>
</reference>
<dbReference type="EC" id="7.4.2.11" evidence="1"/>
<dbReference type="EMBL" id="CP000046">
    <property type="protein sequence ID" value="AAW36435.1"/>
    <property type="molecule type" value="Genomic_DNA"/>
</dbReference>
<dbReference type="RefSeq" id="WP_000571218.1">
    <property type="nucleotide sequence ID" value="NZ_JBGOFO010000002.1"/>
</dbReference>
<dbReference type="SMR" id="Q5HHK4"/>
<dbReference type="KEGG" id="sac:SACOL0882"/>
<dbReference type="HOGENOM" id="CLU_000604_1_3_9"/>
<dbReference type="Proteomes" id="UP000000530">
    <property type="component" value="Chromosome"/>
</dbReference>
<dbReference type="GO" id="GO:0005886">
    <property type="term" value="C:plasma membrane"/>
    <property type="evidence" value="ECO:0007669"/>
    <property type="project" value="UniProtKB-SubCell"/>
</dbReference>
<dbReference type="GO" id="GO:0033232">
    <property type="term" value="F:ABC-type D-methionine transporter activity"/>
    <property type="evidence" value="ECO:0007669"/>
    <property type="project" value="UniProtKB-EC"/>
</dbReference>
<dbReference type="GO" id="GO:0005524">
    <property type="term" value="F:ATP binding"/>
    <property type="evidence" value="ECO:0007669"/>
    <property type="project" value="UniProtKB-KW"/>
</dbReference>
<dbReference type="GO" id="GO:0016887">
    <property type="term" value="F:ATP hydrolysis activity"/>
    <property type="evidence" value="ECO:0007669"/>
    <property type="project" value="InterPro"/>
</dbReference>
<dbReference type="CDD" id="cd03258">
    <property type="entry name" value="ABC_MetN_methionine_transporter"/>
    <property type="match status" value="1"/>
</dbReference>
<dbReference type="FunFam" id="3.40.50.300:FF:000056">
    <property type="entry name" value="Cell division ATP-binding protein FtsE"/>
    <property type="match status" value="1"/>
</dbReference>
<dbReference type="Gene3D" id="3.30.70.260">
    <property type="match status" value="1"/>
</dbReference>
<dbReference type="Gene3D" id="3.40.50.300">
    <property type="entry name" value="P-loop containing nucleotide triphosphate hydrolases"/>
    <property type="match status" value="1"/>
</dbReference>
<dbReference type="InterPro" id="IPR003593">
    <property type="entry name" value="AAA+_ATPase"/>
</dbReference>
<dbReference type="InterPro" id="IPR003439">
    <property type="entry name" value="ABC_transporter-like_ATP-bd"/>
</dbReference>
<dbReference type="InterPro" id="IPR017871">
    <property type="entry name" value="ABC_transporter-like_CS"/>
</dbReference>
<dbReference type="InterPro" id="IPR045865">
    <property type="entry name" value="ACT-like_dom_sf"/>
</dbReference>
<dbReference type="InterPro" id="IPR041701">
    <property type="entry name" value="MetN_ABC"/>
</dbReference>
<dbReference type="InterPro" id="IPR050086">
    <property type="entry name" value="MetN_ABC_transporter-like"/>
</dbReference>
<dbReference type="InterPro" id="IPR018449">
    <property type="entry name" value="NIL_domain"/>
</dbReference>
<dbReference type="InterPro" id="IPR027417">
    <property type="entry name" value="P-loop_NTPase"/>
</dbReference>
<dbReference type="PANTHER" id="PTHR43166">
    <property type="entry name" value="AMINO ACID IMPORT ATP-BINDING PROTEIN"/>
    <property type="match status" value="1"/>
</dbReference>
<dbReference type="PANTHER" id="PTHR43166:SF36">
    <property type="entry name" value="METHIONINE IMPORT ATP-BINDING PROTEIN METN 2"/>
    <property type="match status" value="1"/>
</dbReference>
<dbReference type="Pfam" id="PF00005">
    <property type="entry name" value="ABC_tran"/>
    <property type="match status" value="1"/>
</dbReference>
<dbReference type="Pfam" id="PF09383">
    <property type="entry name" value="NIL"/>
    <property type="match status" value="1"/>
</dbReference>
<dbReference type="SMART" id="SM00382">
    <property type="entry name" value="AAA"/>
    <property type="match status" value="1"/>
</dbReference>
<dbReference type="SMART" id="SM00930">
    <property type="entry name" value="NIL"/>
    <property type="match status" value="1"/>
</dbReference>
<dbReference type="SUPFAM" id="SSF55021">
    <property type="entry name" value="ACT-like"/>
    <property type="match status" value="1"/>
</dbReference>
<dbReference type="SUPFAM" id="SSF52540">
    <property type="entry name" value="P-loop containing nucleoside triphosphate hydrolases"/>
    <property type="match status" value="1"/>
</dbReference>
<dbReference type="PROSITE" id="PS00211">
    <property type="entry name" value="ABC_TRANSPORTER_1"/>
    <property type="match status" value="1"/>
</dbReference>
<dbReference type="PROSITE" id="PS50893">
    <property type="entry name" value="ABC_TRANSPORTER_2"/>
    <property type="match status" value="1"/>
</dbReference>
<dbReference type="PROSITE" id="PS51264">
    <property type="entry name" value="METN"/>
    <property type="match status" value="1"/>
</dbReference>
<comment type="function">
    <text evidence="1">Part of the ABC transporter complex MetNIQ involved in methionine import. Responsible for energy coupling to the transport system.</text>
</comment>
<comment type="catalytic activity">
    <reaction evidence="1">
        <text>L-methionine(out) + ATP + H2O = L-methionine(in) + ADP + phosphate + H(+)</text>
        <dbReference type="Rhea" id="RHEA:29779"/>
        <dbReference type="ChEBI" id="CHEBI:15377"/>
        <dbReference type="ChEBI" id="CHEBI:15378"/>
        <dbReference type="ChEBI" id="CHEBI:30616"/>
        <dbReference type="ChEBI" id="CHEBI:43474"/>
        <dbReference type="ChEBI" id="CHEBI:57844"/>
        <dbReference type="ChEBI" id="CHEBI:456216"/>
        <dbReference type="EC" id="7.4.2.11"/>
    </reaction>
</comment>
<comment type="catalytic activity">
    <reaction evidence="1">
        <text>D-methionine(out) + ATP + H2O = D-methionine(in) + ADP + phosphate + H(+)</text>
        <dbReference type="Rhea" id="RHEA:29767"/>
        <dbReference type="ChEBI" id="CHEBI:15377"/>
        <dbReference type="ChEBI" id="CHEBI:15378"/>
        <dbReference type="ChEBI" id="CHEBI:30616"/>
        <dbReference type="ChEBI" id="CHEBI:43474"/>
        <dbReference type="ChEBI" id="CHEBI:57932"/>
        <dbReference type="ChEBI" id="CHEBI:456216"/>
        <dbReference type="EC" id="7.4.2.11"/>
    </reaction>
</comment>
<comment type="subunit">
    <text evidence="1">The complex is composed of two ATP-binding proteins (MetN), two transmembrane proteins (MetI) and a solute-binding protein (MetQ).</text>
</comment>
<comment type="subcellular location">
    <subcellularLocation>
        <location evidence="1">Cell membrane</location>
        <topology evidence="1">Peripheral membrane protein</topology>
    </subcellularLocation>
</comment>
<comment type="similarity">
    <text evidence="1">Belongs to the ABC transporter superfamily. Methionine importer (TC 3.A.1.24) family.</text>
</comment>
<sequence>MIELKEVVKEYRTKNKEVLAVDHVNLSIRAGSIYGVIGFSGAGKSTLIRMFNHLEAPTSGEVIIDGDHIGQLSKNGLRAKRQKVSMIFQHFNLLWSRTVLKNIMFPLEIAGVPRRRAKQKALELVELVGLKGREKAYPSELSGGQKQRVGIARALANDPTVLLCDEATSALDPQTTDEILDLLLKIREQQNLTIVLITHEMHVIRRICDEVAVMESGKVIEQGPVTQVFENPQHTVTKRFVKDDLNDDFETSLTELEPLEKDAYIVRLVFAGSTTTEPIVSSLSTAYDIKINILEANIKNTKNGTVGFLVLHIPYISSVDFGKFEKELIERQVKMEVLRHG</sequence>
<accession>Q5HHK4</accession>